<evidence type="ECO:0000255" key="1">
    <source>
        <dbReference type="PROSITE-ProRule" id="PRU00108"/>
    </source>
</evidence>
<evidence type="ECO:0000256" key="2">
    <source>
        <dbReference type="SAM" id="MobiDB-lite"/>
    </source>
</evidence>
<evidence type="ECO:0000305" key="3"/>
<feature type="chain" id="PRO_0000048935" description="Homeobox protein Nkx-2.4">
    <location>
        <begin position="1"/>
        <end position="354"/>
    </location>
</feature>
<feature type="DNA-binding region" description="Homeobox" evidence="1">
    <location>
        <begin position="189"/>
        <end position="248"/>
    </location>
</feature>
<feature type="region of interest" description="Disordered" evidence="2">
    <location>
        <begin position="246"/>
        <end position="329"/>
    </location>
</feature>
<feature type="compositionally biased region" description="Pro residues" evidence="2">
    <location>
        <begin position="263"/>
        <end position="272"/>
    </location>
</feature>
<feature type="sequence conflict" description="In Ref. 3; AAG35617." evidence="3" ref="3">
    <original>P</original>
    <variation>A</variation>
    <location>
        <position position="97"/>
    </location>
</feature>
<feature type="sequence conflict" description="In Ref. 3; AAG35617." evidence="3" ref="3">
    <original>V</original>
    <variation>A</variation>
    <location>
        <position position="275"/>
    </location>
</feature>
<dbReference type="EMBL" id="AL158013">
    <property type="status" value="NOT_ANNOTATED_CDS"/>
    <property type="molecule type" value="Genomic_DNA"/>
</dbReference>
<dbReference type="EMBL" id="CH471133">
    <property type="protein sequence ID" value="EAX10185.1"/>
    <property type="molecule type" value="Genomic_DNA"/>
</dbReference>
<dbReference type="EMBL" id="AF202037">
    <property type="protein sequence ID" value="AAG35617.1"/>
    <property type="molecule type" value="Genomic_DNA"/>
</dbReference>
<dbReference type="CCDS" id="CCDS42855.1"/>
<dbReference type="RefSeq" id="NP_149416.1">
    <property type="nucleotide sequence ID" value="NM_033176.2"/>
</dbReference>
<dbReference type="SMR" id="Q9H2Z4"/>
<dbReference type="BioGRID" id="569674">
    <property type="interactions" value="12"/>
</dbReference>
<dbReference type="FunCoup" id="Q9H2Z4">
    <property type="interactions" value="529"/>
</dbReference>
<dbReference type="IntAct" id="Q9H2Z4">
    <property type="interactions" value="11"/>
</dbReference>
<dbReference type="MINT" id="Q9H2Z4"/>
<dbReference type="STRING" id="9606.ENSP00000345147"/>
<dbReference type="GlyGen" id="Q9H2Z4">
    <property type="glycosylation" value="3 sites, 1 O-linked glycan (1 site)"/>
</dbReference>
<dbReference type="iPTMnet" id="Q9H2Z4"/>
<dbReference type="PhosphoSitePlus" id="Q9H2Z4"/>
<dbReference type="BioMuta" id="NKX2-4"/>
<dbReference type="DMDM" id="206729913"/>
<dbReference type="jPOST" id="Q9H2Z4"/>
<dbReference type="MassIVE" id="Q9H2Z4"/>
<dbReference type="PaxDb" id="9606-ENSP00000345147"/>
<dbReference type="PeptideAtlas" id="Q9H2Z4"/>
<dbReference type="ProteomicsDB" id="80636"/>
<dbReference type="Pumba" id="Q9H2Z4"/>
<dbReference type="Antibodypedia" id="60221">
    <property type="antibodies" value="143 antibodies from 24 providers"/>
</dbReference>
<dbReference type="DNASU" id="644524"/>
<dbReference type="Ensembl" id="ENST00000351817.5">
    <property type="protein sequence ID" value="ENSP00000345147.4"/>
    <property type="gene ID" value="ENSG00000125816.5"/>
</dbReference>
<dbReference type="GeneID" id="644524"/>
<dbReference type="KEGG" id="hsa:644524"/>
<dbReference type="MANE-Select" id="ENST00000351817.5">
    <property type="protein sequence ID" value="ENSP00000345147.4"/>
    <property type="RefSeq nucleotide sequence ID" value="NM_033176.2"/>
    <property type="RefSeq protein sequence ID" value="NP_149416.1"/>
</dbReference>
<dbReference type="UCSC" id="uc010gcz.4">
    <property type="organism name" value="human"/>
</dbReference>
<dbReference type="AGR" id="HGNC:7837"/>
<dbReference type="CTD" id="644524"/>
<dbReference type="DisGeNET" id="644524"/>
<dbReference type="GeneCards" id="NKX2-4"/>
<dbReference type="HGNC" id="HGNC:7837">
    <property type="gene designation" value="NKX2-4"/>
</dbReference>
<dbReference type="HPA" id="ENSG00000125816">
    <property type="expression patterns" value="Tissue enhanced (testis)"/>
</dbReference>
<dbReference type="MIM" id="607808">
    <property type="type" value="gene"/>
</dbReference>
<dbReference type="neXtProt" id="NX_Q9H2Z4"/>
<dbReference type="OpenTargets" id="ENSG00000125816"/>
<dbReference type="PharmGKB" id="PA31644"/>
<dbReference type="VEuPathDB" id="HostDB:ENSG00000125816"/>
<dbReference type="eggNOG" id="KOG0842">
    <property type="taxonomic scope" value="Eukaryota"/>
</dbReference>
<dbReference type="GeneTree" id="ENSGT00940000162247"/>
<dbReference type="HOGENOM" id="CLU_052416_0_0_1"/>
<dbReference type="InParanoid" id="Q9H2Z4"/>
<dbReference type="OMA" id="VSQFPHS"/>
<dbReference type="OrthoDB" id="3137333at2759"/>
<dbReference type="PAN-GO" id="Q9H2Z4">
    <property type="GO annotations" value="5 GO annotations based on evolutionary models"/>
</dbReference>
<dbReference type="PhylomeDB" id="Q9H2Z4"/>
<dbReference type="TreeFam" id="TF351204"/>
<dbReference type="PathwayCommons" id="Q9H2Z4"/>
<dbReference type="SignaLink" id="Q9H2Z4"/>
<dbReference type="BioGRID-ORCS" id="644524">
    <property type="hits" value="16 hits in 1149 CRISPR screens"/>
</dbReference>
<dbReference type="GenomeRNAi" id="644524"/>
<dbReference type="Pharos" id="Q9H2Z4">
    <property type="development level" value="Tdark"/>
</dbReference>
<dbReference type="PRO" id="PR:Q9H2Z4"/>
<dbReference type="Proteomes" id="UP000005640">
    <property type="component" value="Chromosome 20"/>
</dbReference>
<dbReference type="RNAct" id="Q9H2Z4">
    <property type="molecule type" value="protein"/>
</dbReference>
<dbReference type="Bgee" id="ENSG00000125816">
    <property type="expression patterns" value="Expressed in primordial germ cell in gonad and 7 other cell types or tissues"/>
</dbReference>
<dbReference type="GO" id="GO:0000785">
    <property type="term" value="C:chromatin"/>
    <property type="evidence" value="ECO:0000247"/>
    <property type="project" value="NTNU_SB"/>
</dbReference>
<dbReference type="GO" id="GO:0005634">
    <property type="term" value="C:nucleus"/>
    <property type="evidence" value="ECO:0000318"/>
    <property type="project" value="GO_Central"/>
</dbReference>
<dbReference type="GO" id="GO:0000981">
    <property type="term" value="F:DNA-binding transcription factor activity, RNA polymerase II-specific"/>
    <property type="evidence" value="ECO:0000247"/>
    <property type="project" value="NTNU_SB"/>
</dbReference>
<dbReference type="GO" id="GO:0000978">
    <property type="term" value="F:RNA polymerase II cis-regulatory region sequence-specific DNA binding"/>
    <property type="evidence" value="ECO:0000318"/>
    <property type="project" value="GO_Central"/>
</dbReference>
<dbReference type="GO" id="GO:0030154">
    <property type="term" value="P:cell differentiation"/>
    <property type="evidence" value="ECO:0000318"/>
    <property type="project" value="GO_Central"/>
</dbReference>
<dbReference type="GO" id="GO:0006357">
    <property type="term" value="P:regulation of transcription by RNA polymerase II"/>
    <property type="evidence" value="ECO:0000318"/>
    <property type="project" value="GO_Central"/>
</dbReference>
<dbReference type="CDD" id="cd00086">
    <property type="entry name" value="homeodomain"/>
    <property type="match status" value="1"/>
</dbReference>
<dbReference type="FunFam" id="1.10.10.60:FF:000108">
    <property type="entry name" value="NK2 homeobox 1"/>
    <property type="match status" value="1"/>
</dbReference>
<dbReference type="Gene3D" id="1.10.10.60">
    <property type="entry name" value="Homeodomain-like"/>
    <property type="match status" value="1"/>
</dbReference>
<dbReference type="InterPro" id="IPR001356">
    <property type="entry name" value="HD"/>
</dbReference>
<dbReference type="InterPro" id="IPR020479">
    <property type="entry name" value="HD_metazoa"/>
</dbReference>
<dbReference type="InterPro" id="IPR017970">
    <property type="entry name" value="Homeobox_CS"/>
</dbReference>
<dbReference type="InterPro" id="IPR050394">
    <property type="entry name" value="Homeobox_NK-like"/>
</dbReference>
<dbReference type="InterPro" id="IPR009057">
    <property type="entry name" value="Homeodomain-like_sf"/>
</dbReference>
<dbReference type="PANTHER" id="PTHR24340">
    <property type="entry name" value="HOMEOBOX PROTEIN NKX"/>
    <property type="match status" value="1"/>
</dbReference>
<dbReference type="PANTHER" id="PTHR24340:SF40">
    <property type="entry name" value="HOMEOBOX PROTEIN NKX-2.4"/>
    <property type="match status" value="1"/>
</dbReference>
<dbReference type="Pfam" id="PF00046">
    <property type="entry name" value="Homeodomain"/>
    <property type="match status" value="1"/>
</dbReference>
<dbReference type="PRINTS" id="PR00024">
    <property type="entry name" value="HOMEOBOX"/>
</dbReference>
<dbReference type="SMART" id="SM00389">
    <property type="entry name" value="HOX"/>
    <property type="match status" value="1"/>
</dbReference>
<dbReference type="SUPFAM" id="SSF46689">
    <property type="entry name" value="Homeodomain-like"/>
    <property type="match status" value="1"/>
</dbReference>
<dbReference type="PROSITE" id="PS00027">
    <property type="entry name" value="HOMEOBOX_1"/>
    <property type="match status" value="1"/>
</dbReference>
<dbReference type="PROSITE" id="PS50071">
    <property type="entry name" value="HOMEOBOX_2"/>
    <property type="match status" value="1"/>
</dbReference>
<gene>
    <name type="primary">NKX2-4</name>
    <name type="synonym">NKX2D</name>
</gene>
<reference key="1">
    <citation type="journal article" date="2001" name="Nature">
        <title>The DNA sequence and comparative analysis of human chromosome 20.</title>
        <authorList>
            <person name="Deloukas P."/>
            <person name="Matthews L.H."/>
            <person name="Ashurst J.L."/>
            <person name="Burton J."/>
            <person name="Gilbert J.G.R."/>
            <person name="Jones M."/>
            <person name="Stavrides G."/>
            <person name="Almeida J.P."/>
            <person name="Babbage A.K."/>
            <person name="Bagguley C.L."/>
            <person name="Bailey J."/>
            <person name="Barlow K.F."/>
            <person name="Bates K.N."/>
            <person name="Beard L.M."/>
            <person name="Beare D.M."/>
            <person name="Beasley O.P."/>
            <person name="Bird C.P."/>
            <person name="Blakey S.E."/>
            <person name="Bridgeman A.M."/>
            <person name="Brown A.J."/>
            <person name="Buck D."/>
            <person name="Burrill W.D."/>
            <person name="Butler A.P."/>
            <person name="Carder C."/>
            <person name="Carter N.P."/>
            <person name="Chapman J.C."/>
            <person name="Clamp M."/>
            <person name="Clark G."/>
            <person name="Clark L.N."/>
            <person name="Clark S.Y."/>
            <person name="Clee C.M."/>
            <person name="Clegg S."/>
            <person name="Cobley V.E."/>
            <person name="Collier R.E."/>
            <person name="Connor R.E."/>
            <person name="Corby N.R."/>
            <person name="Coulson A."/>
            <person name="Coville G.J."/>
            <person name="Deadman R."/>
            <person name="Dhami P.D."/>
            <person name="Dunn M."/>
            <person name="Ellington A.G."/>
            <person name="Frankland J.A."/>
            <person name="Fraser A."/>
            <person name="French L."/>
            <person name="Garner P."/>
            <person name="Grafham D.V."/>
            <person name="Griffiths C."/>
            <person name="Griffiths M.N.D."/>
            <person name="Gwilliam R."/>
            <person name="Hall R.E."/>
            <person name="Hammond S."/>
            <person name="Harley J.L."/>
            <person name="Heath P.D."/>
            <person name="Ho S."/>
            <person name="Holden J.L."/>
            <person name="Howden P.J."/>
            <person name="Huckle E."/>
            <person name="Hunt A.R."/>
            <person name="Hunt S.E."/>
            <person name="Jekosch K."/>
            <person name="Johnson C.M."/>
            <person name="Johnson D."/>
            <person name="Kay M.P."/>
            <person name="Kimberley A.M."/>
            <person name="King A."/>
            <person name="Knights A."/>
            <person name="Laird G.K."/>
            <person name="Lawlor S."/>
            <person name="Lehvaeslaiho M.H."/>
            <person name="Leversha M.A."/>
            <person name="Lloyd C."/>
            <person name="Lloyd D.M."/>
            <person name="Lovell J.D."/>
            <person name="Marsh V.L."/>
            <person name="Martin S.L."/>
            <person name="McConnachie L.J."/>
            <person name="McLay K."/>
            <person name="McMurray A.A."/>
            <person name="Milne S.A."/>
            <person name="Mistry D."/>
            <person name="Moore M.J.F."/>
            <person name="Mullikin J.C."/>
            <person name="Nickerson T."/>
            <person name="Oliver K."/>
            <person name="Parker A."/>
            <person name="Patel R."/>
            <person name="Pearce T.A.V."/>
            <person name="Peck A.I."/>
            <person name="Phillimore B.J.C.T."/>
            <person name="Prathalingam S.R."/>
            <person name="Plumb R.W."/>
            <person name="Ramsay H."/>
            <person name="Rice C.M."/>
            <person name="Ross M.T."/>
            <person name="Scott C.E."/>
            <person name="Sehra H.K."/>
            <person name="Shownkeen R."/>
            <person name="Sims S."/>
            <person name="Skuce C.D."/>
            <person name="Smith M.L."/>
            <person name="Soderlund C."/>
            <person name="Steward C.A."/>
            <person name="Sulston J.E."/>
            <person name="Swann R.M."/>
            <person name="Sycamore N."/>
            <person name="Taylor R."/>
            <person name="Tee L."/>
            <person name="Thomas D.W."/>
            <person name="Thorpe A."/>
            <person name="Tracey A."/>
            <person name="Tromans A.C."/>
            <person name="Vaudin M."/>
            <person name="Wall M."/>
            <person name="Wallis J.M."/>
            <person name="Whitehead S.L."/>
            <person name="Whittaker P."/>
            <person name="Willey D.L."/>
            <person name="Williams L."/>
            <person name="Williams S.A."/>
            <person name="Wilming L."/>
            <person name="Wray P.W."/>
            <person name="Hubbard T."/>
            <person name="Durbin R.M."/>
            <person name="Bentley D.R."/>
            <person name="Beck S."/>
            <person name="Rogers J."/>
        </authorList>
    </citation>
    <scope>NUCLEOTIDE SEQUENCE [LARGE SCALE GENOMIC DNA]</scope>
</reference>
<reference key="2">
    <citation type="submission" date="2005-09" db="EMBL/GenBank/DDBJ databases">
        <authorList>
            <person name="Mural R.J."/>
            <person name="Istrail S."/>
            <person name="Sutton G.G."/>
            <person name="Florea L."/>
            <person name="Halpern A.L."/>
            <person name="Mobarry C.M."/>
            <person name="Lippert R."/>
            <person name="Walenz B."/>
            <person name="Shatkay H."/>
            <person name="Dew I."/>
            <person name="Miller J.R."/>
            <person name="Flanigan M.J."/>
            <person name="Edwards N.J."/>
            <person name="Bolanos R."/>
            <person name="Fasulo D."/>
            <person name="Halldorsson B.V."/>
            <person name="Hannenhalli S."/>
            <person name="Turner R."/>
            <person name="Yooseph S."/>
            <person name="Lu F."/>
            <person name="Nusskern D.R."/>
            <person name="Shue B.C."/>
            <person name="Zheng X.H."/>
            <person name="Zhong F."/>
            <person name="Delcher A.L."/>
            <person name="Huson D.H."/>
            <person name="Kravitz S.A."/>
            <person name="Mouchard L."/>
            <person name="Reinert K."/>
            <person name="Remington K.A."/>
            <person name="Clark A.G."/>
            <person name="Waterman M.S."/>
            <person name="Eichler E.E."/>
            <person name="Adams M.D."/>
            <person name="Hunkapiller M.W."/>
            <person name="Myers E.W."/>
            <person name="Venter J.C."/>
        </authorList>
    </citation>
    <scope>NUCLEOTIDE SEQUENCE [LARGE SCALE GENOMIC DNA]</scope>
</reference>
<reference key="3">
    <citation type="journal article" date="2000" name="Mamm. Genome">
        <title>Conserved linkage of NK-2 homeobox gene pairs Nkx2-2/2-4 and Nkx2-1/2-9 in mammals.</title>
        <authorList>
            <person name="Wang C.-C."/>
            <person name="Brodnicki T."/>
            <person name="Copeland N.G."/>
            <person name="Jenkins N.A."/>
            <person name="Harvey R.P."/>
        </authorList>
    </citation>
    <scope>NUCLEOTIDE SEQUENCE [GENOMIC DNA] OF 1-289</scope>
</reference>
<accession>Q9H2Z4</accession>
<accession>Q5VZV8</accession>
<name>NKX24_HUMAN</name>
<comment type="function">
    <text>Probable transcription factor.</text>
</comment>
<comment type="interaction">
    <interactant intactId="EBI-9995757">
        <id>Q9H2Z4</id>
    </interactant>
    <interactant intactId="EBI-17490746">
        <id>A8MTQ0</id>
        <label>NOTO</label>
    </interactant>
    <organismsDiffer>false</organismsDiffer>
    <experiments>3</experiments>
</comment>
<comment type="subcellular location">
    <subcellularLocation>
        <location evidence="1">Nucleus</location>
    </subcellularLocation>
</comment>
<comment type="similarity">
    <text evidence="3">Belongs to the NK-2 homeobox family.</text>
</comment>
<proteinExistence type="evidence at protein level"/>
<protein>
    <recommendedName>
        <fullName>Homeobox protein Nkx-2.4</fullName>
    </recommendedName>
    <alternativeName>
        <fullName>Homeobox protein NK-2 homolog D</fullName>
    </alternativeName>
</protein>
<sequence length="354" mass="36179">MSLSPKHTTPFSVSDILSPIEETYKKFSGAMDGAPPGLGAPLGAAAAYRAPPPGPSSQAATVAGMQPSHAMAGHNAAAAAAAAAAAAAAAATYHMPPGVSQFPHGAMGSYCNGGLGNMGELPAYTDGMRGGAATGWYGANPDPRYSSISRFMGPSAGVNVAGMGSLTGIADAAKSLGPLHAAAAAAAPRRKRRVLFSQAQVYELERRFKQQKYLSAPEREHLASMIHLTPTQVKIWFQNHRYKMKRQAKDKAAQQLQQEGGLGPPPPPPPSPRRVAVPVLVKDGKPCQNGASTPTPGQAGPQPPAPTPAPELEELSPSPPALHGPGGGLAALDAAAGEYSGGVLGANLLYGRTW</sequence>
<keyword id="KW-0217">Developmental protein</keyword>
<keyword id="KW-0238">DNA-binding</keyword>
<keyword id="KW-0371">Homeobox</keyword>
<keyword id="KW-0539">Nucleus</keyword>
<keyword id="KW-1267">Proteomics identification</keyword>
<keyword id="KW-1185">Reference proteome</keyword>
<organism>
    <name type="scientific">Homo sapiens</name>
    <name type="common">Human</name>
    <dbReference type="NCBI Taxonomy" id="9606"/>
    <lineage>
        <taxon>Eukaryota</taxon>
        <taxon>Metazoa</taxon>
        <taxon>Chordata</taxon>
        <taxon>Craniata</taxon>
        <taxon>Vertebrata</taxon>
        <taxon>Euteleostomi</taxon>
        <taxon>Mammalia</taxon>
        <taxon>Eutheria</taxon>
        <taxon>Euarchontoglires</taxon>
        <taxon>Primates</taxon>
        <taxon>Haplorrhini</taxon>
        <taxon>Catarrhini</taxon>
        <taxon>Hominidae</taxon>
        <taxon>Homo</taxon>
    </lineage>
</organism>